<protein>
    <recommendedName>
        <fullName>Stress-associated endoplasmic reticulum protein 1</fullName>
    </recommendedName>
    <alternativeName>
        <fullName>Ribosome-attached membrane protein 4</fullName>
    </alternativeName>
</protein>
<name>SERP1_MOUSE</name>
<comment type="function">
    <text evidence="1">Interacts with target proteins during their translocation into the lumen of the endoplasmic reticulum. Protects unfolded target proteins against degradation during ER stress. May facilitate glycosylation of target proteins after termination of ER stress. May modulate the use of N-glycosylation sites on target proteins.</text>
</comment>
<comment type="subunit">
    <text evidence="1">Interacts with SEC61B, SEC61A1 and the SEC61 complex. Interacts with CANX.</text>
</comment>
<comment type="subcellular location">
    <subcellularLocation>
        <location evidence="1">Membrane</location>
        <topology evidence="1">Single-pass membrane protein</topology>
    </subcellularLocation>
    <subcellularLocation>
        <location evidence="1">Endoplasmic reticulum membrane</location>
        <topology evidence="1">Single-pass membrane protein</topology>
    </subcellularLocation>
</comment>
<comment type="similarity">
    <text evidence="4">Belongs to the RAMP4 family.</text>
</comment>
<organism>
    <name type="scientific">Mus musculus</name>
    <name type="common">Mouse</name>
    <dbReference type="NCBI Taxonomy" id="10090"/>
    <lineage>
        <taxon>Eukaryota</taxon>
        <taxon>Metazoa</taxon>
        <taxon>Chordata</taxon>
        <taxon>Craniata</taxon>
        <taxon>Vertebrata</taxon>
        <taxon>Euteleostomi</taxon>
        <taxon>Mammalia</taxon>
        <taxon>Eutheria</taxon>
        <taxon>Euarchontoglires</taxon>
        <taxon>Glires</taxon>
        <taxon>Rodentia</taxon>
        <taxon>Myomorpha</taxon>
        <taxon>Muroidea</taxon>
        <taxon>Muridae</taxon>
        <taxon>Murinae</taxon>
        <taxon>Mus</taxon>
        <taxon>Mus</taxon>
    </lineage>
</organism>
<proteinExistence type="inferred from homology"/>
<keyword id="KW-0256">Endoplasmic reticulum</keyword>
<keyword id="KW-0472">Membrane</keyword>
<keyword id="KW-1185">Reference proteome</keyword>
<keyword id="KW-0812">Transmembrane</keyword>
<keyword id="KW-1133">Transmembrane helix</keyword>
<keyword id="KW-0834">Unfolded protein response</keyword>
<dbReference type="EMBL" id="AK002653">
    <property type="protein sequence ID" value="BAB22260.1"/>
    <property type="molecule type" value="mRNA"/>
</dbReference>
<dbReference type="EMBL" id="AB041655">
    <property type="protein sequence ID" value="BAB93547.1"/>
    <property type="molecule type" value="mRNA"/>
</dbReference>
<dbReference type="EMBL" id="AK032680">
    <property type="protein sequence ID" value="BAC27985.1"/>
    <property type="molecule type" value="mRNA"/>
</dbReference>
<dbReference type="EMBL" id="AK050508">
    <property type="protein sequence ID" value="BAC34297.1"/>
    <property type="molecule type" value="mRNA"/>
</dbReference>
<dbReference type="EMBL" id="AK075776">
    <property type="protein sequence ID" value="BAC35950.1"/>
    <property type="molecule type" value="mRNA"/>
</dbReference>
<dbReference type="EMBL" id="AK144732">
    <property type="protein sequence ID" value="BAE26037.1"/>
    <property type="molecule type" value="mRNA"/>
</dbReference>
<dbReference type="EMBL" id="AK148485">
    <property type="protein sequence ID" value="BAE28580.1"/>
    <property type="molecule type" value="mRNA"/>
</dbReference>
<dbReference type="EMBL" id="AK149786">
    <property type="protein sequence ID" value="BAE29083.1"/>
    <property type="molecule type" value="mRNA"/>
</dbReference>
<dbReference type="EMBL" id="AK150005">
    <property type="protein sequence ID" value="BAE29232.1"/>
    <property type="molecule type" value="mRNA"/>
</dbReference>
<dbReference type="EMBL" id="AK150025">
    <property type="protein sequence ID" value="BAE29250.1"/>
    <property type="molecule type" value="mRNA"/>
</dbReference>
<dbReference type="EMBL" id="AK150368">
    <property type="protein sequence ID" value="BAE29501.1"/>
    <property type="molecule type" value="mRNA"/>
</dbReference>
<dbReference type="EMBL" id="AK150428">
    <property type="protein sequence ID" value="BAE29551.1"/>
    <property type="molecule type" value="mRNA"/>
</dbReference>
<dbReference type="EMBL" id="AK150659">
    <property type="protein sequence ID" value="BAE29745.1"/>
    <property type="molecule type" value="mRNA"/>
</dbReference>
<dbReference type="EMBL" id="AK150714">
    <property type="protein sequence ID" value="BAE29792.1"/>
    <property type="molecule type" value="mRNA"/>
</dbReference>
<dbReference type="EMBL" id="AK150770">
    <property type="protein sequence ID" value="BAE29836.1"/>
    <property type="molecule type" value="mRNA"/>
</dbReference>
<dbReference type="EMBL" id="AK150809">
    <property type="protein sequence ID" value="BAE29872.1"/>
    <property type="molecule type" value="mRNA"/>
</dbReference>
<dbReference type="EMBL" id="AK151323">
    <property type="protein sequence ID" value="BAE30304.1"/>
    <property type="molecule type" value="mRNA"/>
</dbReference>
<dbReference type="EMBL" id="AK151384">
    <property type="protein sequence ID" value="BAE30356.1"/>
    <property type="molecule type" value="mRNA"/>
</dbReference>
<dbReference type="EMBL" id="AK151456">
    <property type="protein sequence ID" value="BAE30415.1"/>
    <property type="molecule type" value="mRNA"/>
</dbReference>
<dbReference type="EMBL" id="AK151669">
    <property type="protein sequence ID" value="BAE30595.1"/>
    <property type="molecule type" value="mRNA"/>
</dbReference>
<dbReference type="EMBL" id="AK152373">
    <property type="protein sequence ID" value="BAE31163.1"/>
    <property type="molecule type" value="mRNA"/>
</dbReference>
<dbReference type="EMBL" id="AK152383">
    <property type="protein sequence ID" value="BAE31171.1"/>
    <property type="molecule type" value="mRNA"/>
</dbReference>
<dbReference type="EMBL" id="AK152583">
    <property type="protein sequence ID" value="BAE31333.1"/>
    <property type="molecule type" value="mRNA"/>
</dbReference>
<dbReference type="EMBL" id="AK152636">
    <property type="protein sequence ID" value="BAE31378.1"/>
    <property type="molecule type" value="mRNA"/>
</dbReference>
<dbReference type="EMBL" id="AK152806">
    <property type="protein sequence ID" value="BAE31511.1"/>
    <property type="molecule type" value="mRNA"/>
</dbReference>
<dbReference type="EMBL" id="AK152882">
    <property type="protein sequence ID" value="BAE31567.1"/>
    <property type="molecule type" value="mRNA"/>
</dbReference>
<dbReference type="EMBL" id="AK152996">
    <property type="protein sequence ID" value="BAE31639.1"/>
    <property type="molecule type" value="mRNA"/>
</dbReference>
<dbReference type="EMBL" id="AK153056">
    <property type="protein sequence ID" value="BAE31682.1"/>
    <property type="molecule type" value="mRNA"/>
</dbReference>
<dbReference type="EMBL" id="AK153118">
    <property type="protein sequence ID" value="BAE31733.1"/>
    <property type="molecule type" value="mRNA"/>
</dbReference>
<dbReference type="EMBL" id="AK153138">
    <property type="protein sequence ID" value="BAE31750.1"/>
    <property type="molecule type" value="mRNA"/>
</dbReference>
<dbReference type="EMBL" id="AK153286">
    <property type="protein sequence ID" value="BAE31869.1"/>
    <property type="molecule type" value="mRNA"/>
</dbReference>
<dbReference type="EMBL" id="AK153415">
    <property type="protein sequence ID" value="BAE31975.1"/>
    <property type="molecule type" value="mRNA"/>
</dbReference>
<dbReference type="EMBL" id="AK159271">
    <property type="protein sequence ID" value="BAE34950.1"/>
    <property type="molecule type" value="mRNA"/>
</dbReference>
<dbReference type="EMBL" id="AK161595">
    <property type="protein sequence ID" value="BAE36482.1"/>
    <property type="molecule type" value="mRNA"/>
</dbReference>
<dbReference type="EMBL" id="AK166004">
    <property type="protein sequence ID" value="BAE38513.1"/>
    <property type="status" value="ALT_TERM"/>
    <property type="molecule type" value="mRNA"/>
</dbReference>
<dbReference type="EMBL" id="AK166052">
    <property type="protein sequence ID" value="BAE38545.1"/>
    <property type="molecule type" value="mRNA"/>
</dbReference>
<dbReference type="EMBL" id="AK167482">
    <property type="protein sequence ID" value="BAE39563.1"/>
    <property type="molecule type" value="mRNA"/>
</dbReference>
<dbReference type="EMBL" id="AK167952">
    <property type="protein sequence ID" value="BAE39953.1"/>
    <property type="molecule type" value="mRNA"/>
</dbReference>
<dbReference type="EMBL" id="AK168046">
    <property type="protein sequence ID" value="BAE40028.1"/>
    <property type="molecule type" value="mRNA"/>
</dbReference>
<dbReference type="EMBL" id="AK168569">
    <property type="protein sequence ID" value="BAE40439.1"/>
    <property type="molecule type" value="mRNA"/>
</dbReference>
<dbReference type="EMBL" id="AK168734">
    <property type="protein sequence ID" value="BAE40575.1"/>
    <property type="molecule type" value="mRNA"/>
</dbReference>
<dbReference type="EMBL" id="AK168754">
    <property type="protein sequence ID" value="BAE40592.1"/>
    <property type="molecule type" value="mRNA"/>
</dbReference>
<dbReference type="EMBL" id="AK168947">
    <property type="protein sequence ID" value="BAE40753.1"/>
    <property type="molecule type" value="mRNA"/>
</dbReference>
<dbReference type="EMBL" id="AK169049">
    <property type="protein sequence ID" value="BAE40837.1"/>
    <property type="molecule type" value="mRNA"/>
</dbReference>
<dbReference type="EMBL" id="AK169175">
    <property type="protein sequence ID" value="BAE40954.1"/>
    <property type="molecule type" value="mRNA"/>
</dbReference>
<dbReference type="EMBL" id="AK170734">
    <property type="protein sequence ID" value="BAE41989.1"/>
    <property type="molecule type" value="mRNA"/>
</dbReference>
<dbReference type="EMBL" id="BC002114">
    <property type="protein sequence ID" value="AAH02114.1"/>
    <property type="molecule type" value="mRNA"/>
</dbReference>
<dbReference type="CCDS" id="CCDS38436.1"/>
<dbReference type="RefSeq" id="NP_109610.1">
    <property type="nucleotide sequence ID" value="NM_030685.3"/>
</dbReference>
<dbReference type="SMR" id="Q9Z1W5"/>
<dbReference type="BioGRID" id="205786">
    <property type="interactions" value="2"/>
</dbReference>
<dbReference type="FunCoup" id="Q9Z1W5">
    <property type="interactions" value="1155"/>
</dbReference>
<dbReference type="STRING" id="10090.ENSMUSP00000029385"/>
<dbReference type="PhosphoSitePlus" id="Q9Z1W5"/>
<dbReference type="PaxDb" id="10090-ENSMUSP00000029385"/>
<dbReference type="Antibodypedia" id="46738">
    <property type="antibodies" value="108 antibodies from 24 providers"/>
</dbReference>
<dbReference type="DNASU" id="28146"/>
<dbReference type="Ensembl" id="ENSMUST00000029385.9">
    <property type="protein sequence ID" value="ENSMUSP00000029385.8"/>
    <property type="gene ID" value="ENSMUSG00000027808.9"/>
</dbReference>
<dbReference type="GeneID" id="28146"/>
<dbReference type="KEGG" id="mmu:28146"/>
<dbReference type="UCSC" id="uc008phs.2">
    <property type="organism name" value="mouse"/>
</dbReference>
<dbReference type="AGR" id="MGI:92638"/>
<dbReference type="CTD" id="27230"/>
<dbReference type="MGI" id="MGI:92638">
    <property type="gene designation" value="Serp1"/>
</dbReference>
<dbReference type="VEuPathDB" id="HostDB:ENSMUSG00000027808"/>
<dbReference type="eggNOG" id="KOG3491">
    <property type="taxonomic scope" value="Eukaryota"/>
</dbReference>
<dbReference type="GeneTree" id="ENSGT00940000161729"/>
<dbReference type="HOGENOM" id="CLU_160944_3_0_1"/>
<dbReference type="InParanoid" id="Q9Z1W5"/>
<dbReference type="OMA" id="KSNDAFH"/>
<dbReference type="OrthoDB" id="16679at2759"/>
<dbReference type="PhylomeDB" id="Q9Z1W5"/>
<dbReference type="TreeFam" id="TF313229"/>
<dbReference type="Reactome" id="R-MMU-9609523">
    <property type="pathway name" value="Insertion of tail-anchored proteins into the endoplasmic reticulum membrane"/>
</dbReference>
<dbReference type="BioGRID-ORCS" id="28146">
    <property type="hits" value="1 hit in 78 CRISPR screens"/>
</dbReference>
<dbReference type="ChiTaRS" id="Serp1">
    <property type="organism name" value="mouse"/>
</dbReference>
<dbReference type="PRO" id="PR:Q9Z1W5"/>
<dbReference type="Proteomes" id="UP000000589">
    <property type="component" value="Chromosome 3"/>
</dbReference>
<dbReference type="RNAct" id="Q9Z1W5">
    <property type="molecule type" value="protein"/>
</dbReference>
<dbReference type="Bgee" id="ENSMUSG00000027808">
    <property type="expression patterns" value="Expressed in parotid gland and 267 other cell types or tissues"/>
</dbReference>
<dbReference type="GO" id="GO:0005881">
    <property type="term" value="C:cytoplasmic microtubule"/>
    <property type="evidence" value="ECO:0000250"/>
    <property type="project" value="UniProtKB"/>
</dbReference>
<dbReference type="GO" id="GO:0005789">
    <property type="term" value="C:endoplasmic reticulum membrane"/>
    <property type="evidence" value="ECO:0007669"/>
    <property type="project" value="UniProtKB-SubCell"/>
</dbReference>
<dbReference type="GO" id="GO:0030968">
    <property type="term" value="P:endoplasmic reticulum unfolded protein response"/>
    <property type="evidence" value="ECO:0000315"/>
    <property type="project" value="MGI"/>
</dbReference>
<dbReference type="GO" id="GO:0006006">
    <property type="term" value="P:glucose metabolic process"/>
    <property type="evidence" value="ECO:0000315"/>
    <property type="project" value="MGI"/>
</dbReference>
<dbReference type="GO" id="GO:0030073">
    <property type="term" value="P:insulin secretion"/>
    <property type="evidence" value="ECO:0000315"/>
    <property type="project" value="MGI"/>
</dbReference>
<dbReference type="GO" id="GO:0048644">
    <property type="term" value="P:muscle organ morphogenesis"/>
    <property type="evidence" value="ECO:0000315"/>
    <property type="project" value="MGI"/>
</dbReference>
<dbReference type="GO" id="GO:0060124">
    <property type="term" value="P:positive regulation of growth hormone secretion"/>
    <property type="evidence" value="ECO:0000315"/>
    <property type="project" value="MGI"/>
</dbReference>
<dbReference type="GO" id="GO:0032024">
    <property type="term" value="P:positive regulation of insulin secretion"/>
    <property type="evidence" value="ECO:0000315"/>
    <property type="project" value="MGI"/>
</dbReference>
<dbReference type="GO" id="GO:0046622">
    <property type="term" value="P:positive regulation of organ growth"/>
    <property type="evidence" value="ECO:0000315"/>
    <property type="project" value="MGI"/>
</dbReference>
<dbReference type="GO" id="GO:0045727">
    <property type="term" value="P:positive regulation of translation"/>
    <property type="evidence" value="ECO:0000315"/>
    <property type="project" value="MGI"/>
</dbReference>
<dbReference type="GO" id="GO:0009791">
    <property type="term" value="P:post-embryonic development"/>
    <property type="evidence" value="ECO:0000315"/>
    <property type="project" value="MGI"/>
</dbReference>
<dbReference type="GO" id="GO:0001501">
    <property type="term" value="P:skeletal system development"/>
    <property type="evidence" value="ECO:0000315"/>
    <property type="project" value="MGI"/>
</dbReference>
<dbReference type="InterPro" id="IPR010580">
    <property type="entry name" value="ER_stress-assoc"/>
</dbReference>
<dbReference type="PANTHER" id="PTHR15601">
    <property type="entry name" value="STRESS ASSOCIATED ENDOPLASMIC RETICULUM PROTEIN SERP1/RAMP4"/>
    <property type="match status" value="1"/>
</dbReference>
<dbReference type="PANTHER" id="PTHR15601:SF14">
    <property type="entry name" value="STRESS-ASSOCIATED ENDOPLASMIC RETICULUM PROTEIN 1"/>
    <property type="match status" value="1"/>
</dbReference>
<dbReference type="Pfam" id="PF06624">
    <property type="entry name" value="RAMP4"/>
    <property type="match status" value="1"/>
</dbReference>
<accession>Q9Z1W5</accession>
<accession>Q3TMC9</accession>
<evidence type="ECO:0000250" key="1">
    <source>
        <dbReference type="UniProtKB" id="Q9R2C1"/>
    </source>
</evidence>
<evidence type="ECO:0000255" key="2"/>
<evidence type="ECO:0000256" key="3">
    <source>
        <dbReference type="SAM" id="MobiDB-lite"/>
    </source>
</evidence>
<evidence type="ECO:0000305" key="4"/>
<feature type="chain" id="PRO_0000274795" description="Stress-associated endoplasmic reticulum protein 1">
    <location>
        <begin position="1"/>
        <end position="66"/>
    </location>
</feature>
<feature type="transmembrane region" description="Helical" evidence="2">
    <location>
        <begin position="39"/>
        <end position="59"/>
    </location>
</feature>
<feature type="region of interest" description="Disordered" evidence="3">
    <location>
        <begin position="1"/>
        <end position="31"/>
    </location>
</feature>
<feature type="compositionally biased region" description="Polar residues" evidence="3">
    <location>
        <begin position="17"/>
        <end position="30"/>
    </location>
</feature>
<gene>
    <name type="primary">Serp1</name>
    <name type="synonym">D3Ucla1</name>
    <name type="synonym">Ramp4</name>
</gene>
<reference key="1">
    <citation type="journal article" date="2005" name="Science">
        <title>The transcriptional landscape of the mammalian genome.</title>
        <authorList>
            <person name="Carninci P."/>
            <person name="Kasukawa T."/>
            <person name="Katayama S."/>
            <person name="Gough J."/>
            <person name="Frith M.C."/>
            <person name="Maeda N."/>
            <person name="Oyama R."/>
            <person name="Ravasi T."/>
            <person name="Lenhard B."/>
            <person name="Wells C."/>
            <person name="Kodzius R."/>
            <person name="Shimokawa K."/>
            <person name="Bajic V.B."/>
            <person name="Brenner S.E."/>
            <person name="Batalov S."/>
            <person name="Forrest A.R."/>
            <person name="Zavolan M."/>
            <person name="Davis M.J."/>
            <person name="Wilming L.G."/>
            <person name="Aidinis V."/>
            <person name="Allen J.E."/>
            <person name="Ambesi-Impiombato A."/>
            <person name="Apweiler R."/>
            <person name="Aturaliya R.N."/>
            <person name="Bailey T.L."/>
            <person name="Bansal M."/>
            <person name="Baxter L."/>
            <person name="Beisel K.W."/>
            <person name="Bersano T."/>
            <person name="Bono H."/>
            <person name="Chalk A.M."/>
            <person name="Chiu K.P."/>
            <person name="Choudhary V."/>
            <person name="Christoffels A."/>
            <person name="Clutterbuck D.R."/>
            <person name="Crowe M.L."/>
            <person name="Dalla E."/>
            <person name="Dalrymple B.P."/>
            <person name="de Bono B."/>
            <person name="Della Gatta G."/>
            <person name="di Bernardo D."/>
            <person name="Down T."/>
            <person name="Engstrom P."/>
            <person name="Fagiolini M."/>
            <person name="Faulkner G."/>
            <person name="Fletcher C.F."/>
            <person name="Fukushima T."/>
            <person name="Furuno M."/>
            <person name="Futaki S."/>
            <person name="Gariboldi M."/>
            <person name="Georgii-Hemming P."/>
            <person name="Gingeras T.R."/>
            <person name="Gojobori T."/>
            <person name="Green R.E."/>
            <person name="Gustincich S."/>
            <person name="Harbers M."/>
            <person name="Hayashi Y."/>
            <person name="Hensch T.K."/>
            <person name="Hirokawa N."/>
            <person name="Hill D."/>
            <person name="Huminiecki L."/>
            <person name="Iacono M."/>
            <person name="Ikeo K."/>
            <person name="Iwama A."/>
            <person name="Ishikawa T."/>
            <person name="Jakt M."/>
            <person name="Kanapin A."/>
            <person name="Katoh M."/>
            <person name="Kawasawa Y."/>
            <person name="Kelso J."/>
            <person name="Kitamura H."/>
            <person name="Kitano H."/>
            <person name="Kollias G."/>
            <person name="Krishnan S.P."/>
            <person name="Kruger A."/>
            <person name="Kummerfeld S.K."/>
            <person name="Kurochkin I.V."/>
            <person name="Lareau L.F."/>
            <person name="Lazarevic D."/>
            <person name="Lipovich L."/>
            <person name="Liu J."/>
            <person name="Liuni S."/>
            <person name="McWilliam S."/>
            <person name="Madan Babu M."/>
            <person name="Madera M."/>
            <person name="Marchionni L."/>
            <person name="Matsuda H."/>
            <person name="Matsuzawa S."/>
            <person name="Miki H."/>
            <person name="Mignone F."/>
            <person name="Miyake S."/>
            <person name="Morris K."/>
            <person name="Mottagui-Tabar S."/>
            <person name="Mulder N."/>
            <person name="Nakano N."/>
            <person name="Nakauchi H."/>
            <person name="Ng P."/>
            <person name="Nilsson R."/>
            <person name="Nishiguchi S."/>
            <person name="Nishikawa S."/>
            <person name="Nori F."/>
            <person name="Ohara O."/>
            <person name="Okazaki Y."/>
            <person name="Orlando V."/>
            <person name="Pang K.C."/>
            <person name="Pavan W.J."/>
            <person name="Pavesi G."/>
            <person name="Pesole G."/>
            <person name="Petrovsky N."/>
            <person name="Piazza S."/>
            <person name="Reed J."/>
            <person name="Reid J.F."/>
            <person name="Ring B.Z."/>
            <person name="Ringwald M."/>
            <person name="Rost B."/>
            <person name="Ruan Y."/>
            <person name="Salzberg S.L."/>
            <person name="Sandelin A."/>
            <person name="Schneider C."/>
            <person name="Schoenbach C."/>
            <person name="Sekiguchi K."/>
            <person name="Semple C.A."/>
            <person name="Seno S."/>
            <person name="Sessa L."/>
            <person name="Sheng Y."/>
            <person name="Shibata Y."/>
            <person name="Shimada H."/>
            <person name="Shimada K."/>
            <person name="Silva D."/>
            <person name="Sinclair B."/>
            <person name="Sperling S."/>
            <person name="Stupka E."/>
            <person name="Sugiura K."/>
            <person name="Sultana R."/>
            <person name="Takenaka Y."/>
            <person name="Taki K."/>
            <person name="Tammoja K."/>
            <person name="Tan S.L."/>
            <person name="Tang S."/>
            <person name="Taylor M.S."/>
            <person name="Tegner J."/>
            <person name="Teichmann S.A."/>
            <person name="Ueda H.R."/>
            <person name="van Nimwegen E."/>
            <person name="Verardo R."/>
            <person name="Wei C.L."/>
            <person name="Yagi K."/>
            <person name="Yamanishi H."/>
            <person name="Zabarovsky E."/>
            <person name="Zhu S."/>
            <person name="Zimmer A."/>
            <person name="Hide W."/>
            <person name="Bult C."/>
            <person name="Grimmond S.M."/>
            <person name="Teasdale R.D."/>
            <person name="Liu E.T."/>
            <person name="Brusic V."/>
            <person name="Quackenbush J."/>
            <person name="Wahlestedt C."/>
            <person name="Mattick J.S."/>
            <person name="Hume D.A."/>
            <person name="Kai C."/>
            <person name="Sasaki D."/>
            <person name="Tomaru Y."/>
            <person name="Fukuda S."/>
            <person name="Kanamori-Katayama M."/>
            <person name="Suzuki M."/>
            <person name="Aoki J."/>
            <person name="Arakawa T."/>
            <person name="Iida J."/>
            <person name="Imamura K."/>
            <person name="Itoh M."/>
            <person name="Kato T."/>
            <person name="Kawaji H."/>
            <person name="Kawagashira N."/>
            <person name="Kawashima T."/>
            <person name="Kojima M."/>
            <person name="Kondo S."/>
            <person name="Konno H."/>
            <person name="Nakano K."/>
            <person name="Ninomiya N."/>
            <person name="Nishio T."/>
            <person name="Okada M."/>
            <person name="Plessy C."/>
            <person name="Shibata K."/>
            <person name="Shiraki T."/>
            <person name="Suzuki S."/>
            <person name="Tagami M."/>
            <person name="Waki K."/>
            <person name="Watahiki A."/>
            <person name="Okamura-Oho Y."/>
            <person name="Suzuki H."/>
            <person name="Kawai J."/>
            <person name="Hayashizaki Y."/>
        </authorList>
    </citation>
    <scope>NUCLEOTIDE SEQUENCE [LARGE SCALE MRNA]</scope>
    <source>
        <strain>BALB/cJ</strain>
        <strain>C57BL/6J</strain>
        <strain>NOD</strain>
        <tissue>Amnion</tissue>
        <tissue>Bone marrow macrophage</tissue>
        <tissue>Cerebellum</tissue>
        <tissue>Dendritic cell</tissue>
        <tissue>Embryonic heart</tissue>
        <tissue>Embryonic liver</tissue>
        <tissue>Kidney</tissue>
        <tissue>Lung</tissue>
        <tissue>Pancreas</tissue>
        <tissue>Pituitary</tissue>
    </source>
</reference>
<reference key="2">
    <citation type="journal article" date="2004" name="Genome Res.">
        <title>The status, quality, and expansion of the NIH full-length cDNA project: the Mammalian Gene Collection (MGC).</title>
        <authorList>
            <consortium name="The MGC Project Team"/>
        </authorList>
    </citation>
    <scope>NUCLEOTIDE SEQUENCE [LARGE SCALE MRNA]</scope>
    <source>
        <strain>C57BL/6J</strain>
        <strain>FVB/N</strain>
        <tissue>Mammary tumor</tissue>
    </source>
</reference>
<sequence>MVAKQRIRMANEKHSKNITQRGNVAKTSRNAPEEKASVGPWLLALFIFVVCGSAIFQIIQSIRMGM</sequence>